<comment type="function">
    <text evidence="3">An L-tyrosine:2-oxoglutarate aminotransferase and atromentin synthetase greA catalyze consecutive steps to turn over L-tyrosine into atromentin, which represents the generic precursor molecule for the entire terphenylquinone and pulvinic acid family of pigments, which are widely distributed secondary metabolites in homobasidiomycetes. The first step catalyzed by the aminotransferase converts L-tyrosine in to 4-hydroxyphenylpyruvate (4-HPP). Adenylation of two 4-HPP monomers by the greA adenylation (A) domain, covalent tethering of the monomers as a thioester and oxoester onto the greA thiolation (T) and thioesterase (TE) domains, respectively, and symmetric C-C-bond formation between two monomers catalyzed by the greA TE domain leads to atromentin.</text>
</comment>
<comment type="biophysicochemical properties">
    <phDependence>
        <text evidence="3">Optimum pH is 7.5.</text>
    </phDependence>
    <temperatureDependence>
        <text evidence="3">Optimum temperature is 23 degrees Celsius.</text>
    </temperatureDependence>
</comment>
<comment type="pathway">
    <text evidence="5">Secondary metabolite biosynthesis.</text>
</comment>
<comment type="similarity">
    <text evidence="4">Belongs to the ATP-dependent AMP-binding enzyme family.</text>
</comment>
<proteinExistence type="evidence at protein level"/>
<organism>
    <name type="scientific">Suillus grevillei</name>
    <name type="common">Larch bolete</name>
    <name type="synonym">Boletus elegans</name>
    <dbReference type="NCBI Taxonomy" id="5382"/>
    <lineage>
        <taxon>Eukaryota</taxon>
        <taxon>Fungi</taxon>
        <taxon>Dikarya</taxon>
        <taxon>Basidiomycota</taxon>
        <taxon>Agaricomycotina</taxon>
        <taxon>Agaricomycetes</taxon>
        <taxon>Agaricomycetidae</taxon>
        <taxon>Boletales</taxon>
        <taxon>Suillineae</taxon>
        <taxon>Suillaceae</taxon>
        <taxon>Suillus</taxon>
    </lineage>
</organism>
<keyword id="KW-0596">Phosphopantetheine</keyword>
<keyword id="KW-0597">Phosphoprotein</keyword>
<keyword id="KW-0808">Transferase</keyword>
<name>GREA_SUIGR</name>
<accession>I6NXV7</accession>
<protein>
    <recommendedName>
        <fullName>Atromentin synthetase greA</fullName>
        <ecNumber>2.3.1.-</ecNumber>
    </recommendedName>
    <alternativeName>
        <fullName>Nonribosomal peptide synthase-like enzyme greA</fullName>
        <shortName>NRPS-like</shortName>
    </alternativeName>
</protein>
<evidence type="ECO:0000255" key="1"/>
<evidence type="ECO:0000255" key="2">
    <source>
        <dbReference type="PROSITE-ProRule" id="PRU00258"/>
    </source>
</evidence>
<evidence type="ECO:0000269" key="3">
    <source>
    </source>
</evidence>
<evidence type="ECO:0000305" key="4"/>
<evidence type="ECO:0000305" key="5">
    <source>
    </source>
</evidence>
<dbReference type="EC" id="2.3.1.-"/>
<dbReference type="EMBL" id="JQ681152">
    <property type="protein sequence ID" value="AFB76152.1"/>
    <property type="molecule type" value="Genomic_DNA"/>
</dbReference>
<dbReference type="SMR" id="I6NXV7"/>
<dbReference type="ESTHER" id="suigr-grea">
    <property type="family name" value="Thioesterase"/>
</dbReference>
<dbReference type="BioCyc" id="MetaCyc:MONOMER-18723"/>
<dbReference type="GO" id="GO:0016740">
    <property type="term" value="F:transferase activity"/>
    <property type="evidence" value="ECO:0007669"/>
    <property type="project" value="UniProtKB-KW"/>
</dbReference>
<dbReference type="GO" id="GO:0009058">
    <property type="term" value="P:biosynthetic process"/>
    <property type="evidence" value="ECO:0007669"/>
    <property type="project" value="InterPro"/>
</dbReference>
<dbReference type="Gene3D" id="3.30.300.30">
    <property type="match status" value="1"/>
</dbReference>
<dbReference type="Gene3D" id="1.10.1200.10">
    <property type="entry name" value="ACP-like"/>
    <property type="match status" value="1"/>
</dbReference>
<dbReference type="Gene3D" id="3.40.50.1820">
    <property type="entry name" value="alpha/beta hydrolase"/>
    <property type="match status" value="1"/>
</dbReference>
<dbReference type="Gene3D" id="3.40.50.12780">
    <property type="entry name" value="N-terminal domain of ligase-like"/>
    <property type="match status" value="1"/>
</dbReference>
<dbReference type="InterPro" id="IPR029058">
    <property type="entry name" value="AB_hydrolase_fold"/>
</dbReference>
<dbReference type="InterPro" id="IPR036736">
    <property type="entry name" value="ACP-like_sf"/>
</dbReference>
<dbReference type="InterPro" id="IPR045851">
    <property type="entry name" value="AMP-bd_C_sf"/>
</dbReference>
<dbReference type="InterPro" id="IPR020845">
    <property type="entry name" value="AMP-binding_CS"/>
</dbReference>
<dbReference type="InterPro" id="IPR000873">
    <property type="entry name" value="AMP-dep_synth/lig_dom"/>
</dbReference>
<dbReference type="InterPro" id="IPR042099">
    <property type="entry name" value="ANL_N_sf"/>
</dbReference>
<dbReference type="InterPro" id="IPR050237">
    <property type="entry name" value="ATP-dep_AMP-bd_enzyme"/>
</dbReference>
<dbReference type="InterPro" id="IPR020802">
    <property type="entry name" value="PKS_thioesterase"/>
</dbReference>
<dbReference type="InterPro" id="IPR009081">
    <property type="entry name" value="PP-bd_ACP"/>
</dbReference>
<dbReference type="InterPro" id="IPR001031">
    <property type="entry name" value="Thioesterase"/>
</dbReference>
<dbReference type="PANTHER" id="PTHR43767">
    <property type="entry name" value="LONG-CHAIN-FATTY-ACID--COA LIGASE"/>
    <property type="match status" value="1"/>
</dbReference>
<dbReference type="PANTHER" id="PTHR43767:SF10">
    <property type="entry name" value="SURFACTIN SYNTHASE SUBUNIT 1"/>
    <property type="match status" value="1"/>
</dbReference>
<dbReference type="Pfam" id="PF00501">
    <property type="entry name" value="AMP-binding"/>
    <property type="match status" value="1"/>
</dbReference>
<dbReference type="Pfam" id="PF00550">
    <property type="entry name" value="PP-binding"/>
    <property type="match status" value="1"/>
</dbReference>
<dbReference type="Pfam" id="PF00975">
    <property type="entry name" value="Thioesterase"/>
    <property type="match status" value="1"/>
</dbReference>
<dbReference type="SMART" id="SM00824">
    <property type="entry name" value="PKS_TE"/>
    <property type="match status" value="1"/>
</dbReference>
<dbReference type="SUPFAM" id="SSF56801">
    <property type="entry name" value="Acetyl-CoA synthetase-like"/>
    <property type="match status" value="1"/>
</dbReference>
<dbReference type="SUPFAM" id="SSF47336">
    <property type="entry name" value="ACP-like"/>
    <property type="match status" value="1"/>
</dbReference>
<dbReference type="SUPFAM" id="SSF53474">
    <property type="entry name" value="alpha/beta-Hydrolases"/>
    <property type="match status" value="1"/>
</dbReference>
<dbReference type="PROSITE" id="PS00455">
    <property type="entry name" value="AMP_BINDING"/>
    <property type="match status" value="1"/>
</dbReference>
<dbReference type="PROSITE" id="PS50075">
    <property type="entry name" value="CARRIER"/>
    <property type="match status" value="1"/>
</dbReference>
<feature type="chain" id="PRO_0000442627" description="Atromentin synthetase greA">
    <location>
        <begin position="1"/>
        <end position="958"/>
    </location>
</feature>
<feature type="domain" description="Carrier" evidence="2">
    <location>
        <begin position="597"/>
        <end position="675"/>
    </location>
</feature>
<feature type="region of interest" description="Adenylation (A) domain" evidence="1">
    <location>
        <begin position="60"/>
        <end position="465"/>
    </location>
</feature>
<feature type="region of interest" description="Thiolation and peptide carrier (T) domain" evidence="1">
    <location>
        <begin position="602"/>
        <end position="672"/>
    </location>
</feature>
<feature type="region of interest" description="Thioesterase (TE) domain" evidence="1">
    <location>
        <begin position="698"/>
        <end position="946"/>
    </location>
</feature>
<feature type="modified residue" description="O-(pantetheine 4'-phosphoryl)serine" evidence="2">
    <location>
        <position position="634"/>
    </location>
</feature>
<gene>
    <name type="primary">greA</name>
</gene>
<sequence length="958" mass="104883">MASIAVTTTTTTTTAEFVTSPRTSIVPEQPNTLHDVIAQAVDSYPLHELGFITSSAHDSSIQTKTFSAFNQYVRNLARAMLEWGKPTGSVVVVYLTEHEDNMTAVWACLLAGFVPCLQPALSAQQAHKEGHVAHIKNLFGSATWLTSELGAEQINSISGLEVHLLSELKSSAEKFTVAADWVAYEAKPDDEAILFLTSGSTGFSKAVVHTHRTILAACRAKGQSYGLTSESQVLNWVGFDHVAGSLEMHITPLLYGASQLHVHASAILADPLRLLRLIDEKSIELAFAPNFLLSKLTRDLEKRTDLFGSFDLSSIKRINSGGEAVVSKTAQAFAATMKQLSKNPSAVSFVISAGFGMTETCAGCIYDPVDVLKNKPAHEFLDLGRPINGCEMRIVDPEDGATLRPDGESGELQVRGPMVFVRYYNNAEATSSSFVEGGWYRTGDVGIIENGVMRLSGRIKDTVIVHGVSYGIPELETYLQTVEGVTHSFLAAAPYRAPGQETEGFIIFYSPTFDLNGADASTKLFATHRALRDICVKMITLPPQFVVPIPVNQMEKTTLGKLSRARLISLFKQGQLAQHIARSEELLSEARGATFVAPSTETEKALAKIYAGIFNLAESEMSASDNFFELGGTSIDVIRLKREGEAHFGLPEIPTIQILKHPVVSSLANYVNALLSKDSQTEEYDPIVPLQLTGNKTPIFFVHPGVGEVLIFVNLAKYFQNERPFYALRARGFEPGHPFFTSMDEMVSCYAAAVKRTQATGPYAIAGYSYGGVVAFEVAKRLEAMGDEVKFTGLINIPPHIADRMHEIDWTGGMLNLSYFLGLVSKHDANDLAPALRPMTRNEQLEVVWKLSPPERLVELQLTPGKLDHWVDIAGSLIECGKDYNPSGSVSAVDVFYAIPLRGSKADWLNNQLKPWSGFSRGDASYTDVPGQHYTLMDFDHVPQFQKIFRGRLEARGL</sequence>
<reference key="1">
    <citation type="journal article" date="2012" name="ChemBioChem">
        <title>Characterization of the Suillus grevillei quinone synthetase GreA supports a nonribosomal code for aromatic alpha-keto acids.</title>
        <authorList>
            <person name="Wackler B."/>
            <person name="Lackner G."/>
            <person name="Chooi Y.H."/>
            <person name="Hoffmeister D."/>
        </authorList>
    </citation>
    <scope>NUCLEOTIDE SEQUENCE [GENOMIC DNA]</scope>
    <scope>FUNCTION</scope>
    <scope>BIOPHYSICOCHEMICAL PROPERTIES</scope>
    <source>
        <strain>DSM 8404</strain>
    </source>
</reference>